<name>OMT_ASPNA</name>
<comment type="function">
    <text evidence="2">O-methyltransferase; part of the gene cluster that mediates the biosynthesis of pyrophen and campyrone B, which represent a class of fungal amino acid-derived alpha-pyrone natural products (PubMed:32159958). The first step of pyrophen biosynthesis is catalyzed by the PKS-NRPS hybrid synthetase ATPKS that uptakes and condensates L-phenylalanine and malonyl-CoA in order to produce desmethyldesacetylpyrophen (PubMed:32159958). Although the A domain does not discriminate between 2 enantiomeric phenylalanines, the downstream KS domain must play a gate keeping role to stereoselectively accept the L-phenylalanyl-S-phosphopantetheine (Ppant)-T domain intermediate for chain elongation (PubMed:32159958). The resulting amino acid derived diketide is off-loaded through lactonization to yield the alpha-pyrone intermediate desmethyldesacetylpyrophen (PubMed:32159958). The cluster-specific O-methyltransferase (OMT) then methylates desmethyldesacetylpyrophen to desacetylpyrophen, which is further acetylated to pyrophen by an endogenous yet unidentified N-acetyltransferase (PubMed:32159958). ATPKS has relaxed substrate specificity to activate and extend branched-chain amino acid L-leucine to produce small amounts of campyrone B (PubMed:32159958).</text>
</comment>
<comment type="pathway">
    <text evidence="2">Secondary metabolite biosynthesis.</text>
</comment>
<comment type="similarity">
    <text evidence="1">Belongs to the methyltransferase superfamily.</text>
</comment>
<gene>
    <name evidence="3" type="primary">OMT</name>
    <name type="ORF">ASPNIDRAFT_41845</name>
</gene>
<keyword id="KW-0489">Methyltransferase</keyword>
<keyword id="KW-0808">Transferase</keyword>
<feature type="chain" id="PRO_0000452990" description="O-methyltransferase">
    <location>
        <begin position="1"/>
        <end position="195"/>
    </location>
</feature>
<evidence type="ECO:0000255" key="1"/>
<evidence type="ECO:0000269" key="2">
    <source>
    </source>
</evidence>
<evidence type="ECO:0000303" key="3">
    <source>
    </source>
</evidence>
<reference key="1">
    <citation type="journal article" date="2011" name="Genome Res.">
        <title>Comparative genomics of citric-acid-producing Aspergillus niger ATCC 1015 versus enzyme-producing CBS 513.88.</title>
        <authorList>
            <person name="Andersen M.R."/>
            <person name="Salazar M.P."/>
            <person name="Schaap P.J."/>
            <person name="van de Vondervoort P.J.I."/>
            <person name="Culley D."/>
            <person name="Thykaer J."/>
            <person name="Frisvad J.C."/>
            <person name="Nielsen K.F."/>
            <person name="Albang R."/>
            <person name="Albermann K."/>
            <person name="Berka R.M."/>
            <person name="Braus G.H."/>
            <person name="Braus-Stromeyer S.A."/>
            <person name="Corrochano L.M."/>
            <person name="Dai Z."/>
            <person name="van Dijck P.W.M."/>
            <person name="Hofmann G."/>
            <person name="Lasure L.L."/>
            <person name="Magnuson J.K."/>
            <person name="Menke H."/>
            <person name="Meijer M."/>
            <person name="Meijer S.L."/>
            <person name="Nielsen J.B."/>
            <person name="Nielsen M.L."/>
            <person name="van Ooyen A.J.J."/>
            <person name="Pel H.J."/>
            <person name="Poulsen L."/>
            <person name="Samson R.A."/>
            <person name="Stam H."/>
            <person name="Tsang A."/>
            <person name="van den Brink J.M."/>
            <person name="Atkins A."/>
            <person name="Aerts A."/>
            <person name="Shapiro H."/>
            <person name="Pangilinan J."/>
            <person name="Salamov A."/>
            <person name="Lou Y."/>
            <person name="Lindquist E."/>
            <person name="Lucas S."/>
            <person name="Grimwood J."/>
            <person name="Grigoriev I.V."/>
            <person name="Kubicek C.P."/>
            <person name="Martinez D."/>
            <person name="van Peij N.N.M.E."/>
            <person name="Roubos J.A."/>
            <person name="Nielsen J."/>
            <person name="Baker S.E."/>
        </authorList>
    </citation>
    <scope>NUCLEOTIDE SEQUENCE [LARGE SCALE GENOMIC DNA]</scope>
    <source>
        <strain>ATCC 1015 / CBS 113.46 / FGSC A1144 / LSHB Ac4 / NCTC 3858a / NRRL 328 / USDA 3528.7</strain>
    </source>
</reference>
<reference key="2">
    <citation type="journal article" date="2020" name="J. Nat. Prod.">
        <title>Biosynthesis of Amino Acid Derived alpha-Pyrones by an NRPS-NRPKS Hybrid Megasynthetase in Fungi.</title>
        <authorList>
            <person name="Hai Y."/>
            <person name="Huang A."/>
            <person name="Tang Y."/>
        </authorList>
    </citation>
    <scope>FUNCTION</scope>
    <scope>CATALYTIC ACTIVITY</scope>
    <scope>PATHWAY</scope>
</reference>
<protein>
    <recommendedName>
        <fullName evidence="3">O-methyltransferase</fullName>
        <shortName evidence="3">OMT</shortName>
        <ecNumber evidence="2">2.1.1.-</ecNumber>
    </recommendedName>
    <alternativeName>
        <fullName evidence="3">Pyrophen biosynthesis cluster protein OMT</fullName>
    </alternativeName>
</protein>
<proteinExistence type="evidence at protein level"/>
<accession>G3XNF3</accession>
<sequence>MGQSHLDIGVGTGYYPAKSLKAGAKCTEITLLDLSPNSLQATEQRILETVGREAVRVNTVVASALEPLPFDKAKKFNSISVFFLLHCMPGTPEEKCKLFDVVRPHLAEDGVLVGTTVLGQGVPINWLGQKMMNSYNNNTKSFHNSEDNKAQFDEGLRRNFEEVDSWIMGQVMLFKARKPRQQDAITNVVPKDNLD</sequence>
<organism>
    <name type="scientific">Aspergillus niger (strain ATCC 1015 / CBS 113.46 / FGSC A1144 / LSHB Ac4 / NCTC 3858a / NRRL 328 / USDA 3528.7)</name>
    <dbReference type="NCBI Taxonomy" id="380704"/>
    <lineage>
        <taxon>Eukaryota</taxon>
        <taxon>Fungi</taxon>
        <taxon>Dikarya</taxon>
        <taxon>Ascomycota</taxon>
        <taxon>Pezizomycotina</taxon>
        <taxon>Eurotiomycetes</taxon>
        <taxon>Eurotiomycetidae</taxon>
        <taxon>Eurotiales</taxon>
        <taxon>Aspergillaceae</taxon>
        <taxon>Aspergillus</taxon>
        <taxon>Aspergillus subgen. Circumdati</taxon>
    </lineage>
</organism>
<dbReference type="EC" id="2.1.1.-" evidence="2"/>
<dbReference type="EMBL" id="ACJE01000002">
    <property type="protein sequence ID" value="EHA27897.1"/>
    <property type="molecule type" value="Genomic_DNA"/>
</dbReference>
<dbReference type="SMR" id="G3XNF3"/>
<dbReference type="HOGENOM" id="CLU_046029_0_0_1"/>
<dbReference type="OrthoDB" id="45135at5052"/>
<dbReference type="Proteomes" id="UP000009038">
    <property type="component" value="Unassembled WGS sequence"/>
</dbReference>
<dbReference type="GO" id="GO:0008168">
    <property type="term" value="F:methyltransferase activity"/>
    <property type="evidence" value="ECO:0007669"/>
    <property type="project" value="UniProtKB-KW"/>
</dbReference>
<dbReference type="GO" id="GO:0032259">
    <property type="term" value="P:methylation"/>
    <property type="evidence" value="ECO:0007669"/>
    <property type="project" value="UniProtKB-KW"/>
</dbReference>
<dbReference type="CDD" id="cd02440">
    <property type="entry name" value="AdoMet_MTases"/>
    <property type="match status" value="1"/>
</dbReference>
<dbReference type="Gene3D" id="3.40.50.150">
    <property type="entry name" value="Vaccinia Virus protein VP39"/>
    <property type="match status" value="1"/>
</dbReference>
<dbReference type="InterPro" id="IPR013217">
    <property type="entry name" value="Methyltransf_12"/>
</dbReference>
<dbReference type="InterPro" id="IPR029063">
    <property type="entry name" value="SAM-dependent_MTases_sf"/>
</dbReference>
<dbReference type="Pfam" id="PF08242">
    <property type="entry name" value="Methyltransf_12"/>
    <property type="match status" value="1"/>
</dbReference>
<dbReference type="SUPFAM" id="SSF53335">
    <property type="entry name" value="S-adenosyl-L-methionine-dependent methyltransferases"/>
    <property type="match status" value="1"/>
</dbReference>